<gene>
    <name evidence="1" type="primary">hrcA</name>
    <name type="ordered locus">BamMC406_0663</name>
</gene>
<keyword id="KW-0678">Repressor</keyword>
<keyword id="KW-0346">Stress response</keyword>
<keyword id="KW-0804">Transcription</keyword>
<keyword id="KW-0805">Transcription regulation</keyword>
<comment type="function">
    <text evidence="1">Negative regulator of class I heat shock genes (grpE-dnaK-dnaJ and groELS operons). Prevents heat-shock induction of these operons.</text>
</comment>
<comment type="similarity">
    <text evidence="1">Belongs to the HrcA family.</text>
</comment>
<name>HRCA_BURA4</name>
<proteinExistence type="inferred from homology"/>
<evidence type="ECO:0000255" key="1">
    <source>
        <dbReference type="HAMAP-Rule" id="MF_00081"/>
    </source>
</evidence>
<reference key="1">
    <citation type="submission" date="2008-04" db="EMBL/GenBank/DDBJ databases">
        <title>Complete sequence of chromosome 1 of Burkholderia ambifaria MC40-6.</title>
        <authorList>
            <person name="Copeland A."/>
            <person name="Lucas S."/>
            <person name="Lapidus A."/>
            <person name="Glavina del Rio T."/>
            <person name="Dalin E."/>
            <person name="Tice H."/>
            <person name="Pitluck S."/>
            <person name="Chain P."/>
            <person name="Malfatti S."/>
            <person name="Shin M."/>
            <person name="Vergez L."/>
            <person name="Lang D."/>
            <person name="Schmutz J."/>
            <person name="Larimer F."/>
            <person name="Land M."/>
            <person name="Hauser L."/>
            <person name="Kyrpides N."/>
            <person name="Lykidis A."/>
            <person name="Ramette A."/>
            <person name="Konstantinidis K."/>
            <person name="Tiedje J."/>
            <person name="Richardson P."/>
        </authorList>
    </citation>
    <scope>NUCLEOTIDE SEQUENCE [LARGE SCALE GENOMIC DNA]</scope>
    <source>
        <strain>MC40-6</strain>
    </source>
</reference>
<protein>
    <recommendedName>
        <fullName evidence="1">Heat-inducible transcription repressor HrcA</fullName>
    </recommendedName>
</protein>
<dbReference type="EMBL" id="CP001025">
    <property type="protein sequence ID" value="ACB63159.1"/>
    <property type="molecule type" value="Genomic_DNA"/>
</dbReference>
<dbReference type="RefSeq" id="WP_011656033.1">
    <property type="nucleotide sequence ID" value="NC_010551.1"/>
</dbReference>
<dbReference type="SMR" id="B1YTJ4"/>
<dbReference type="GeneID" id="93083949"/>
<dbReference type="KEGG" id="bac:BamMC406_0663"/>
<dbReference type="HOGENOM" id="CLU_050019_0_0_4"/>
<dbReference type="OrthoDB" id="9783139at2"/>
<dbReference type="Proteomes" id="UP000001680">
    <property type="component" value="Chromosome 1"/>
</dbReference>
<dbReference type="GO" id="GO:0003677">
    <property type="term" value="F:DNA binding"/>
    <property type="evidence" value="ECO:0007669"/>
    <property type="project" value="InterPro"/>
</dbReference>
<dbReference type="GO" id="GO:0045892">
    <property type="term" value="P:negative regulation of DNA-templated transcription"/>
    <property type="evidence" value="ECO:0007669"/>
    <property type="project" value="UniProtKB-UniRule"/>
</dbReference>
<dbReference type="Gene3D" id="3.30.450.40">
    <property type="match status" value="1"/>
</dbReference>
<dbReference type="Gene3D" id="3.30.390.60">
    <property type="entry name" value="Heat-inducible transcription repressor hrca homolog, domain 3"/>
    <property type="match status" value="1"/>
</dbReference>
<dbReference type="Gene3D" id="1.10.10.10">
    <property type="entry name" value="Winged helix-like DNA-binding domain superfamily/Winged helix DNA-binding domain"/>
    <property type="match status" value="1"/>
</dbReference>
<dbReference type="HAMAP" id="MF_00081">
    <property type="entry name" value="HrcA"/>
    <property type="match status" value="1"/>
</dbReference>
<dbReference type="InterPro" id="IPR029016">
    <property type="entry name" value="GAF-like_dom_sf"/>
</dbReference>
<dbReference type="InterPro" id="IPR002571">
    <property type="entry name" value="HrcA"/>
</dbReference>
<dbReference type="InterPro" id="IPR021153">
    <property type="entry name" value="HrcA_C"/>
</dbReference>
<dbReference type="InterPro" id="IPR036388">
    <property type="entry name" value="WH-like_DNA-bd_sf"/>
</dbReference>
<dbReference type="InterPro" id="IPR036390">
    <property type="entry name" value="WH_DNA-bd_sf"/>
</dbReference>
<dbReference type="InterPro" id="IPR005104">
    <property type="entry name" value="WHTH_HrcA_DNA-bd"/>
</dbReference>
<dbReference type="InterPro" id="IPR023120">
    <property type="entry name" value="WHTH_transcript_rep_HrcA_IDD"/>
</dbReference>
<dbReference type="NCBIfam" id="TIGR00331">
    <property type="entry name" value="hrcA"/>
    <property type="match status" value="1"/>
</dbReference>
<dbReference type="PANTHER" id="PTHR34824">
    <property type="entry name" value="HEAT-INDUCIBLE TRANSCRIPTION REPRESSOR HRCA"/>
    <property type="match status" value="1"/>
</dbReference>
<dbReference type="PANTHER" id="PTHR34824:SF1">
    <property type="entry name" value="HEAT-INDUCIBLE TRANSCRIPTION REPRESSOR HRCA"/>
    <property type="match status" value="1"/>
</dbReference>
<dbReference type="Pfam" id="PF01628">
    <property type="entry name" value="HrcA"/>
    <property type="match status" value="1"/>
</dbReference>
<dbReference type="Pfam" id="PF03444">
    <property type="entry name" value="HrcA_DNA-bdg"/>
    <property type="match status" value="1"/>
</dbReference>
<dbReference type="PIRSF" id="PIRSF005485">
    <property type="entry name" value="HrcA"/>
    <property type="match status" value="1"/>
</dbReference>
<dbReference type="SUPFAM" id="SSF55781">
    <property type="entry name" value="GAF domain-like"/>
    <property type="match status" value="1"/>
</dbReference>
<dbReference type="SUPFAM" id="SSF46785">
    <property type="entry name" value="Winged helix' DNA-binding domain"/>
    <property type="match status" value="1"/>
</dbReference>
<feature type="chain" id="PRO_1000092795" description="Heat-inducible transcription repressor HrcA">
    <location>
        <begin position="1"/>
        <end position="340"/>
    </location>
</feature>
<sequence length="340" mass="37420">MLDPRARTLLKTLIERYIADGQPVGSRTLSRYSGLELSPATIRNVMSDLEELGLVSSPHTSAGRVPTPRGYRLFVDTMLTVETPIDAEAVARQVQHTLQAGEPQQRVVAAAASVLSNLSQFAGVVLTPRRSHVFKQIEFMRLSDKRILLIIVTPEGDVQNRMLATPRDYSPSQLTEASNYINAHFAGLSFDEVRRRLRDEIDQLRGDMTTLMHAAVTASTEVPDTEDTVLISGERNLLEVADLSSDMARLRKLFDVFDQKTGLLQLLDVSSHAQGVQIFIGGESTLVPIEEMSVVTAPYEVNGQIVGTLGVIGPTRMAYNRVIPIVDITARLLSLTLSQQ</sequence>
<accession>B1YTJ4</accession>
<organism>
    <name type="scientific">Burkholderia ambifaria (strain MC40-6)</name>
    <dbReference type="NCBI Taxonomy" id="398577"/>
    <lineage>
        <taxon>Bacteria</taxon>
        <taxon>Pseudomonadati</taxon>
        <taxon>Pseudomonadota</taxon>
        <taxon>Betaproteobacteria</taxon>
        <taxon>Burkholderiales</taxon>
        <taxon>Burkholderiaceae</taxon>
        <taxon>Burkholderia</taxon>
        <taxon>Burkholderia cepacia complex</taxon>
    </lineage>
</organism>